<accession>A2QFJ9</accession>
<keyword id="KW-0029">Amino-acid transport</keyword>
<keyword id="KW-0072">Autophagy</keyword>
<keyword id="KW-0325">Glycoprotein</keyword>
<keyword id="KW-0472">Membrane</keyword>
<keyword id="KW-1185">Reference proteome</keyword>
<keyword id="KW-0812">Transmembrane</keyword>
<keyword id="KW-1133">Transmembrane helix</keyword>
<keyword id="KW-0813">Transport</keyword>
<keyword id="KW-0926">Vacuole</keyword>
<evidence type="ECO:0000250" key="1"/>
<evidence type="ECO:0000255" key="2"/>
<evidence type="ECO:0000256" key="3">
    <source>
        <dbReference type="SAM" id="MobiDB-lite"/>
    </source>
</evidence>
<evidence type="ECO:0000305" key="4"/>
<protein>
    <recommendedName>
        <fullName>Autophagy-related protein 22-1</fullName>
    </recommendedName>
</protein>
<gene>
    <name type="primary">atg22-1</name>
    <name type="ORF">An02g14810</name>
</gene>
<feature type="chain" id="PRO_0000318016" description="Autophagy-related protein 22-1">
    <location>
        <begin position="1"/>
        <end position="614"/>
    </location>
</feature>
<feature type="transmembrane region" description="Helical" evidence="2">
    <location>
        <begin position="41"/>
        <end position="61"/>
    </location>
</feature>
<feature type="transmembrane region" description="Helical" evidence="2">
    <location>
        <begin position="126"/>
        <end position="146"/>
    </location>
</feature>
<feature type="transmembrane region" description="Helical" evidence="2">
    <location>
        <begin position="160"/>
        <end position="180"/>
    </location>
</feature>
<feature type="transmembrane region" description="Helical" evidence="2">
    <location>
        <begin position="185"/>
        <end position="205"/>
    </location>
</feature>
<feature type="transmembrane region" description="Helical" evidence="2">
    <location>
        <begin position="291"/>
        <end position="311"/>
    </location>
</feature>
<feature type="transmembrane region" description="Helical" evidence="2">
    <location>
        <begin position="322"/>
        <end position="342"/>
    </location>
</feature>
<feature type="transmembrane region" description="Helical" evidence="2">
    <location>
        <begin position="383"/>
        <end position="403"/>
    </location>
</feature>
<feature type="transmembrane region" description="Helical" evidence="2">
    <location>
        <begin position="417"/>
        <end position="437"/>
    </location>
</feature>
<feature type="transmembrane region" description="Helical" evidence="2">
    <location>
        <begin position="452"/>
        <end position="472"/>
    </location>
</feature>
<feature type="transmembrane region" description="Helical" evidence="2">
    <location>
        <begin position="486"/>
        <end position="506"/>
    </location>
</feature>
<feature type="transmembrane region" description="Helical" evidence="2">
    <location>
        <begin position="523"/>
        <end position="545"/>
    </location>
</feature>
<feature type="transmembrane region" description="Helical" evidence="2">
    <location>
        <begin position="554"/>
        <end position="574"/>
    </location>
</feature>
<feature type="region of interest" description="Disordered" evidence="3">
    <location>
        <begin position="1"/>
        <end position="29"/>
    </location>
</feature>
<feature type="region of interest" description="Disordered" evidence="3">
    <location>
        <begin position="229"/>
        <end position="254"/>
    </location>
</feature>
<feature type="compositionally biased region" description="Polar residues" evidence="3">
    <location>
        <begin position="230"/>
        <end position="254"/>
    </location>
</feature>
<feature type="glycosylation site" description="N-linked (GlcNAc...) asparagine" evidence="2">
    <location>
        <position position="3"/>
    </location>
</feature>
<comment type="function">
    <text evidence="1">Vacuolar effluxer which mediate the efflux of amino acids resulting from autophagic degradation. The release of autophagic amino acids allows the maintenance of protein synthesis and viability during nitrogen starvation (By similarity).</text>
</comment>
<comment type="subcellular location">
    <subcellularLocation>
        <location evidence="1">Vacuole membrane</location>
        <topology evidence="1">Multi-pass membrane protein</topology>
    </subcellularLocation>
    <text evidence="1">Vacuole and punctate structures.</text>
</comment>
<comment type="similarity">
    <text evidence="4">Belongs to the ATG22 family.</text>
</comment>
<comment type="sequence caution" evidence="4">
    <conflict type="erroneous gene model prediction">
        <sequence resource="EMBL-CDS" id="CAK48910"/>
    </conflict>
</comment>
<sequence length="614" mass="66662">MQNCTNSPEDQAASVCPPPPQFPGDDTRPTSKKELAGWYSYGWAAEVFTVCAMGSFLPITLEQMARERGVLLSDKKTPCSATWSSLESTSPSGTWNTIFDATAFTKPGSPRTSQCIIYILGVEINTASFAMYTFSLSVFIQAILIISMSGAADHGSYRKMLLVIFALIGSVSTMLFLAVVPRLYLLGGLFAIISNTCFGASFVLLNSFLPLLVRYHPILMGGHGDGDIPTGTSHDSTSTADGPGQTDGTETTSLLRPEQNRNAYSLGDETQVFASKTSQELKLSTKLSSNGIGIGYIGAVILQAICILVVVETHQTTFSLRLVLFLIGLWWFTFTIPAAMWLRARPGPPLPYGKESGTWTSYMAYAWKSLGRTVMRTRHLRDILLFLAAWFLLSDGIATVSGTAVLFAKTQLGMQPAALGLINVIAMIAGVFGAFSWSFVSRTFNLRASQTIVACIILFELVPLYGLLGFIPAIKSLGYLGLQQPWEMYPLGVIYGLVMGGLSSYCRSFFGELIPPGYEAAFYALYAITDKGSSVFGPAIVGIITDRYGEIRPAFVFLAVLILLPLPLMLLVDVERGKRDALSLSKELKGRPRQEVPVYGAVTHCPSHSENLAE</sequence>
<organism>
    <name type="scientific">Aspergillus niger (strain ATCC MYA-4892 / CBS 513.88 / FGSC A1513)</name>
    <dbReference type="NCBI Taxonomy" id="425011"/>
    <lineage>
        <taxon>Eukaryota</taxon>
        <taxon>Fungi</taxon>
        <taxon>Dikarya</taxon>
        <taxon>Ascomycota</taxon>
        <taxon>Pezizomycotina</taxon>
        <taxon>Eurotiomycetes</taxon>
        <taxon>Eurotiomycetidae</taxon>
        <taxon>Eurotiales</taxon>
        <taxon>Aspergillaceae</taxon>
        <taxon>Aspergillus</taxon>
        <taxon>Aspergillus subgen. Circumdati</taxon>
    </lineage>
</organism>
<name>AT221_ASPNC</name>
<proteinExistence type="inferred from homology"/>
<dbReference type="EMBL" id="AM270040">
    <property type="protein sequence ID" value="CAK48910.1"/>
    <property type="status" value="ALT_SEQ"/>
    <property type="molecule type" value="Genomic_DNA"/>
</dbReference>
<dbReference type="GlyCosmos" id="A2QFJ9">
    <property type="glycosylation" value="1 site, No reported glycans"/>
</dbReference>
<dbReference type="EnsemblFungi" id="CAK48910">
    <property type="protein sequence ID" value="CAK48910"/>
    <property type="gene ID" value="An02g14810"/>
</dbReference>
<dbReference type="VEuPathDB" id="FungiDB:An02g14810"/>
<dbReference type="Proteomes" id="UP000006706">
    <property type="component" value="Chromosome 4R"/>
</dbReference>
<dbReference type="GO" id="GO:0005774">
    <property type="term" value="C:vacuolar membrane"/>
    <property type="evidence" value="ECO:0007669"/>
    <property type="project" value="UniProtKB-SubCell"/>
</dbReference>
<dbReference type="GO" id="GO:0022857">
    <property type="term" value="F:transmembrane transporter activity"/>
    <property type="evidence" value="ECO:0007669"/>
    <property type="project" value="InterPro"/>
</dbReference>
<dbReference type="GO" id="GO:0032974">
    <property type="term" value="P:amino acid transmembrane export from vacuole"/>
    <property type="evidence" value="ECO:0007669"/>
    <property type="project" value="InterPro"/>
</dbReference>
<dbReference type="GO" id="GO:0006914">
    <property type="term" value="P:autophagy"/>
    <property type="evidence" value="ECO:0007669"/>
    <property type="project" value="UniProtKB-KW"/>
</dbReference>
<dbReference type="CDD" id="cd17483">
    <property type="entry name" value="MFS_Atg22_like"/>
    <property type="match status" value="1"/>
</dbReference>
<dbReference type="Gene3D" id="1.20.1250.20">
    <property type="entry name" value="MFS general substrate transporter like domains"/>
    <property type="match status" value="1"/>
</dbReference>
<dbReference type="InterPro" id="IPR044738">
    <property type="entry name" value="Atg22"/>
</dbReference>
<dbReference type="InterPro" id="IPR024671">
    <property type="entry name" value="Atg22-like"/>
</dbReference>
<dbReference type="InterPro" id="IPR050495">
    <property type="entry name" value="ATG22/LtaA_families"/>
</dbReference>
<dbReference type="InterPro" id="IPR020846">
    <property type="entry name" value="MFS_dom"/>
</dbReference>
<dbReference type="InterPro" id="IPR036259">
    <property type="entry name" value="MFS_trans_sf"/>
</dbReference>
<dbReference type="PANTHER" id="PTHR23519">
    <property type="entry name" value="AUTOPHAGY-RELATED PROTEIN 22"/>
    <property type="match status" value="1"/>
</dbReference>
<dbReference type="PANTHER" id="PTHR23519:SF1">
    <property type="entry name" value="AUTOPHAGY-RELATED PROTEIN 22"/>
    <property type="match status" value="1"/>
</dbReference>
<dbReference type="Pfam" id="PF11700">
    <property type="entry name" value="ATG22"/>
    <property type="match status" value="1"/>
</dbReference>
<dbReference type="SUPFAM" id="SSF103473">
    <property type="entry name" value="MFS general substrate transporter"/>
    <property type="match status" value="1"/>
</dbReference>
<reference key="1">
    <citation type="journal article" date="2007" name="Nat. Biotechnol.">
        <title>Genome sequencing and analysis of the versatile cell factory Aspergillus niger CBS 513.88.</title>
        <authorList>
            <person name="Pel H.J."/>
            <person name="de Winde J.H."/>
            <person name="Archer D.B."/>
            <person name="Dyer P.S."/>
            <person name="Hofmann G."/>
            <person name="Schaap P.J."/>
            <person name="Turner G."/>
            <person name="de Vries R.P."/>
            <person name="Albang R."/>
            <person name="Albermann K."/>
            <person name="Andersen M.R."/>
            <person name="Bendtsen J.D."/>
            <person name="Benen J.A.E."/>
            <person name="van den Berg M."/>
            <person name="Breestraat S."/>
            <person name="Caddick M.X."/>
            <person name="Contreras R."/>
            <person name="Cornell M."/>
            <person name="Coutinho P.M."/>
            <person name="Danchin E.G.J."/>
            <person name="Debets A.J.M."/>
            <person name="Dekker P."/>
            <person name="van Dijck P.W.M."/>
            <person name="van Dijk A."/>
            <person name="Dijkhuizen L."/>
            <person name="Driessen A.J.M."/>
            <person name="d'Enfert C."/>
            <person name="Geysens S."/>
            <person name="Goosen C."/>
            <person name="Groot G.S.P."/>
            <person name="de Groot P.W.J."/>
            <person name="Guillemette T."/>
            <person name="Henrissat B."/>
            <person name="Herweijer M."/>
            <person name="van den Hombergh J.P.T.W."/>
            <person name="van den Hondel C.A.M.J.J."/>
            <person name="van der Heijden R.T.J.M."/>
            <person name="van der Kaaij R.M."/>
            <person name="Klis F.M."/>
            <person name="Kools H.J."/>
            <person name="Kubicek C.P."/>
            <person name="van Kuyk P.A."/>
            <person name="Lauber J."/>
            <person name="Lu X."/>
            <person name="van der Maarel M.J.E.C."/>
            <person name="Meulenberg R."/>
            <person name="Menke H."/>
            <person name="Mortimer M.A."/>
            <person name="Nielsen J."/>
            <person name="Oliver S.G."/>
            <person name="Olsthoorn M."/>
            <person name="Pal K."/>
            <person name="van Peij N.N.M.E."/>
            <person name="Ram A.F.J."/>
            <person name="Rinas U."/>
            <person name="Roubos J.A."/>
            <person name="Sagt C.M.J."/>
            <person name="Schmoll M."/>
            <person name="Sun J."/>
            <person name="Ussery D."/>
            <person name="Varga J."/>
            <person name="Vervecken W."/>
            <person name="van de Vondervoort P.J.J."/>
            <person name="Wedler H."/>
            <person name="Woesten H.A.B."/>
            <person name="Zeng A.-P."/>
            <person name="van Ooyen A.J.J."/>
            <person name="Visser J."/>
            <person name="Stam H."/>
        </authorList>
    </citation>
    <scope>NUCLEOTIDE SEQUENCE [LARGE SCALE GENOMIC DNA]</scope>
    <source>
        <strain>ATCC MYA-4892 / CBS 513.88 / FGSC A1513</strain>
    </source>
</reference>